<comment type="miscellaneous">
    <text>A putative lipoprotein (RzoQ, AC C1P601) is entirely encoded within this gene, on the same strand within another reading frame.</text>
</comment>
<comment type="similarity">
    <text evidence="2">To phage N15 gp55.</text>
</comment>
<evidence type="ECO:0000255" key="1"/>
<evidence type="ECO:0000305" key="2"/>
<keyword id="KW-1185">Reference proteome</keyword>
<keyword id="KW-0732">Signal</keyword>
<name>RZPQ_ECOLI</name>
<sequence>MNQIFMVIFLVLSGFIVGNVWSDRGWQKKWAERDAAALSQEVNAQFAARIIEQGRTIARDEAVKDAQQKSAEISARAAYLSDSVNQLRAEAKKYAIRLDAAKHTADLAAAVRGKTTKTAEGMLTNMLGDIAAEAQLYAEIADERYIAGVTCQQIYESLRDKKHQM</sequence>
<organism>
    <name type="scientific">Escherichia coli (strain K12)</name>
    <dbReference type="NCBI Taxonomy" id="83333"/>
    <lineage>
        <taxon>Bacteria</taxon>
        <taxon>Pseudomonadati</taxon>
        <taxon>Pseudomonadota</taxon>
        <taxon>Gammaproteobacteria</taxon>
        <taxon>Enterobacterales</taxon>
        <taxon>Enterobacteriaceae</taxon>
        <taxon>Escherichia</taxon>
    </lineage>
</organism>
<protein>
    <recommendedName>
        <fullName>Uncharacterized protein RzpQ</fullName>
    </recommendedName>
</protein>
<accession>P76158</accession>
<accession>Q2MB88</accession>
<proteinExistence type="inferred from homology"/>
<dbReference type="EMBL" id="U00096">
    <property type="protein sequence ID" value="AAC74626.1"/>
    <property type="molecule type" value="Genomic_DNA"/>
</dbReference>
<dbReference type="EMBL" id="AP009048">
    <property type="protein sequence ID" value="BAE76468.1"/>
    <property type="molecule type" value="Genomic_DNA"/>
</dbReference>
<dbReference type="PIR" id="D64910">
    <property type="entry name" value="D64910"/>
</dbReference>
<dbReference type="RefSeq" id="NP_416071.1">
    <property type="nucleotide sequence ID" value="NC_000913.3"/>
</dbReference>
<dbReference type="RefSeq" id="WP_001071769.1">
    <property type="nucleotide sequence ID" value="NZ_SSUV01000066.1"/>
</dbReference>
<dbReference type="SMR" id="P76158"/>
<dbReference type="BioGRID" id="4263107">
    <property type="interactions" value="9"/>
</dbReference>
<dbReference type="FunCoup" id="P76158">
    <property type="interactions" value="5"/>
</dbReference>
<dbReference type="STRING" id="511145.b1553"/>
<dbReference type="PaxDb" id="511145-b1553"/>
<dbReference type="EnsemblBacteria" id="AAC74626">
    <property type="protein sequence ID" value="AAC74626"/>
    <property type="gene ID" value="b1553"/>
</dbReference>
<dbReference type="GeneID" id="946101"/>
<dbReference type="KEGG" id="ecj:JW1545"/>
<dbReference type="KEGG" id="eco:b1553"/>
<dbReference type="KEGG" id="ecoc:C3026_08965"/>
<dbReference type="PATRIC" id="fig|1411691.4.peg.711"/>
<dbReference type="EchoBASE" id="EB3589"/>
<dbReference type="eggNOG" id="ENOG5031C0Y">
    <property type="taxonomic scope" value="Bacteria"/>
</dbReference>
<dbReference type="HOGENOM" id="CLU_128652_2_0_6"/>
<dbReference type="InParanoid" id="P76158"/>
<dbReference type="OMA" id="CERIYES"/>
<dbReference type="OrthoDB" id="6631774at2"/>
<dbReference type="PhylomeDB" id="P76158"/>
<dbReference type="BioCyc" id="EcoCyc:G6826-MONOMER"/>
<dbReference type="PRO" id="PR:P76158"/>
<dbReference type="Proteomes" id="UP000000625">
    <property type="component" value="Chromosome"/>
</dbReference>
<dbReference type="InterPro" id="IPR019659">
    <property type="entry name" value="DUF2514"/>
</dbReference>
<dbReference type="Pfam" id="PF10721">
    <property type="entry name" value="DUF2514"/>
    <property type="match status" value="1"/>
</dbReference>
<reference key="1">
    <citation type="journal article" date="1997" name="Science">
        <title>The complete genome sequence of Escherichia coli K-12.</title>
        <authorList>
            <person name="Blattner F.R."/>
            <person name="Plunkett G. III"/>
            <person name="Bloch C.A."/>
            <person name="Perna N.T."/>
            <person name="Burland V."/>
            <person name="Riley M."/>
            <person name="Collado-Vides J."/>
            <person name="Glasner J.D."/>
            <person name="Rode C.K."/>
            <person name="Mayhew G.F."/>
            <person name="Gregor J."/>
            <person name="Davis N.W."/>
            <person name="Kirkpatrick H.A."/>
            <person name="Goeden M.A."/>
            <person name="Rose D.J."/>
            <person name="Mau B."/>
            <person name="Shao Y."/>
        </authorList>
    </citation>
    <scope>NUCLEOTIDE SEQUENCE [LARGE SCALE GENOMIC DNA]</scope>
    <source>
        <strain>K12 / MG1655 / ATCC 47076</strain>
    </source>
</reference>
<reference key="2">
    <citation type="journal article" date="2006" name="Mol. Syst. Biol.">
        <title>Highly accurate genome sequences of Escherichia coli K-12 strains MG1655 and W3110.</title>
        <authorList>
            <person name="Hayashi K."/>
            <person name="Morooka N."/>
            <person name="Yamamoto Y."/>
            <person name="Fujita K."/>
            <person name="Isono K."/>
            <person name="Choi S."/>
            <person name="Ohtsubo E."/>
            <person name="Baba T."/>
            <person name="Wanner B.L."/>
            <person name="Mori H."/>
            <person name="Horiuchi T."/>
        </authorList>
    </citation>
    <scope>NUCLEOTIDE SEQUENCE [LARGE SCALE GENOMIC DNA]</scope>
    <source>
        <strain>K12 / W3110 / ATCC 27325 / DSM 5911</strain>
    </source>
</reference>
<gene>
    <name type="primary">rzpQ</name>
    <name type="synonym">ydfP</name>
    <name type="ordered locus">b1553</name>
    <name type="ordered locus">JW1545</name>
</gene>
<feature type="signal peptide" evidence="1">
    <location>
        <begin position="1"/>
        <end position="22"/>
    </location>
</feature>
<feature type="chain" id="PRO_0000013846" description="Uncharacterized protein RzpQ">
    <location>
        <begin position="23"/>
        <end position="165"/>
    </location>
</feature>